<sequence>MHAKSLTELRAALAAKECSAVELAQHYLKRIDAARDLNAFVHVDADLTLAQAKAADAELARGAGGALTGLPIAHKDVFVTRGWRSTAGSKMLANYESPFDATVVARLQAAGMVTLGKTNMDEFAMGSSNENSAFGAVKNPWDTNAVPGGSSGGSSAAVAARLAPAATGTDTGGSIRQPASFAGVTGIKPTYGRVSRYGMIAFASSLDQGGPMAQSASDCALLLNAMAGFDERDSTSLERDDEDFTRHLGQPWAAGNDAGKPLAGLRIGLPNEYFGAGLADDVRATIDAALKQYEALGATLVPVSLPKTELSIPVYYVIAPAEASSNLSRFDGVRFGHRAAQYGDLLDMYKKSRAEGFGPEVKRRILVGTYVLSHGYYDAYYLQAQKIRRIIANDFQEAFKSCDVIMGPASPTVAWDLGAKGDDPVQMYLADIYTLSVSLAGLPGMSVPCGFGAGANAKRPVGLQIIGNYFNEARMLQVADAFQRATDWHKQVPAGV</sequence>
<dbReference type="EC" id="6.3.5.7" evidence="1"/>
<dbReference type="EMBL" id="CP000378">
    <property type="protein sequence ID" value="ABF77393.1"/>
    <property type="molecule type" value="Genomic_DNA"/>
</dbReference>
<dbReference type="SMR" id="Q1BSL2"/>
<dbReference type="HOGENOM" id="CLU_009600_0_3_4"/>
<dbReference type="GO" id="GO:0030956">
    <property type="term" value="C:glutamyl-tRNA(Gln) amidotransferase complex"/>
    <property type="evidence" value="ECO:0007669"/>
    <property type="project" value="InterPro"/>
</dbReference>
<dbReference type="GO" id="GO:0005524">
    <property type="term" value="F:ATP binding"/>
    <property type="evidence" value="ECO:0007669"/>
    <property type="project" value="UniProtKB-KW"/>
</dbReference>
<dbReference type="GO" id="GO:0050567">
    <property type="term" value="F:glutaminyl-tRNA synthase (glutamine-hydrolyzing) activity"/>
    <property type="evidence" value="ECO:0007669"/>
    <property type="project" value="UniProtKB-UniRule"/>
</dbReference>
<dbReference type="GO" id="GO:0006412">
    <property type="term" value="P:translation"/>
    <property type="evidence" value="ECO:0007669"/>
    <property type="project" value="UniProtKB-UniRule"/>
</dbReference>
<dbReference type="Gene3D" id="3.90.1300.10">
    <property type="entry name" value="Amidase signature (AS) domain"/>
    <property type="match status" value="1"/>
</dbReference>
<dbReference type="HAMAP" id="MF_00120">
    <property type="entry name" value="GatA"/>
    <property type="match status" value="1"/>
</dbReference>
<dbReference type="InterPro" id="IPR000120">
    <property type="entry name" value="Amidase"/>
</dbReference>
<dbReference type="InterPro" id="IPR020556">
    <property type="entry name" value="Amidase_CS"/>
</dbReference>
<dbReference type="InterPro" id="IPR023631">
    <property type="entry name" value="Amidase_dom"/>
</dbReference>
<dbReference type="InterPro" id="IPR036928">
    <property type="entry name" value="AS_sf"/>
</dbReference>
<dbReference type="InterPro" id="IPR004412">
    <property type="entry name" value="GatA"/>
</dbReference>
<dbReference type="NCBIfam" id="TIGR00132">
    <property type="entry name" value="gatA"/>
    <property type="match status" value="1"/>
</dbReference>
<dbReference type="PANTHER" id="PTHR11895:SF151">
    <property type="entry name" value="GLUTAMYL-TRNA(GLN) AMIDOTRANSFERASE SUBUNIT A"/>
    <property type="match status" value="1"/>
</dbReference>
<dbReference type="PANTHER" id="PTHR11895">
    <property type="entry name" value="TRANSAMIDASE"/>
    <property type="match status" value="1"/>
</dbReference>
<dbReference type="Pfam" id="PF01425">
    <property type="entry name" value="Amidase"/>
    <property type="match status" value="1"/>
</dbReference>
<dbReference type="SUPFAM" id="SSF75304">
    <property type="entry name" value="Amidase signature (AS) enzymes"/>
    <property type="match status" value="1"/>
</dbReference>
<dbReference type="PROSITE" id="PS00571">
    <property type="entry name" value="AMIDASES"/>
    <property type="match status" value="1"/>
</dbReference>
<accession>Q1BSL2</accession>
<gene>
    <name evidence="1" type="primary">gatA</name>
    <name type="ordered locus">Bcen_2494</name>
</gene>
<organism>
    <name type="scientific">Burkholderia orbicola (strain AU 1054)</name>
    <dbReference type="NCBI Taxonomy" id="331271"/>
    <lineage>
        <taxon>Bacteria</taxon>
        <taxon>Pseudomonadati</taxon>
        <taxon>Pseudomonadota</taxon>
        <taxon>Betaproteobacteria</taxon>
        <taxon>Burkholderiales</taxon>
        <taxon>Burkholderiaceae</taxon>
        <taxon>Burkholderia</taxon>
        <taxon>Burkholderia cepacia complex</taxon>
        <taxon>Burkholderia orbicola</taxon>
    </lineage>
</organism>
<comment type="function">
    <text evidence="1">Allows the formation of correctly charged Gln-tRNA(Gln) through the transamidation of misacylated Glu-tRNA(Gln) in organisms which lack glutaminyl-tRNA synthetase. The reaction takes place in the presence of glutamine and ATP through an activated gamma-phospho-Glu-tRNA(Gln).</text>
</comment>
<comment type="catalytic activity">
    <reaction evidence="1">
        <text>L-glutamyl-tRNA(Gln) + L-glutamine + ATP + H2O = L-glutaminyl-tRNA(Gln) + L-glutamate + ADP + phosphate + H(+)</text>
        <dbReference type="Rhea" id="RHEA:17521"/>
        <dbReference type="Rhea" id="RHEA-COMP:9681"/>
        <dbReference type="Rhea" id="RHEA-COMP:9684"/>
        <dbReference type="ChEBI" id="CHEBI:15377"/>
        <dbReference type="ChEBI" id="CHEBI:15378"/>
        <dbReference type="ChEBI" id="CHEBI:29985"/>
        <dbReference type="ChEBI" id="CHEBI:30616"/>
        <dbReference type="ChEBI" id="CHEBI:43474"/>
        <dbReference type="ChEBI" id="CHEBI:58359"/>
        <dbReference type="ChEBI" id="CHEBI:78520"/>
        <dbReference type="ChEBI" id="CHEBI:78521"/>
        <dbReference type="ChEBI" id="CHEBI:456216"/>
        <dbReference type="EC" id="6.3.5.7"/>
    </reaction>
</comment>
<comment type="subunit">
    <text evidence="1">Heterotrimer of A, B and C subunits.</text>
</comment>
<comment type="similarity">
    <text evidence="1">Belongs to the amidase family. GatA subfamily.</text>
</comment>
<feature type="chain" id="PRO_1000015805" description="Glutamyl-tRNA(Gln) amidotransferase subunit A">
    <location>
        <begin position="1"/>
        <end position="496"/>
    </location>
</feature>
<feature type="active site" description="Charge relay system" evidence="1">
    <location>
        <position position="75"/>
    </location>
</feature>
<feature type="active site" description="Charge relay system" evidence="1">
    <location>
        <position position="150"/>
    </location>
</feature>
<feature type="active site" description="Acyl-ester intermediate" evidence="1">
    <location>
        <position position="174"/>
    </location>
</feature>
<keyword id="KW-0067">ATP-binding</keyword>
<keyword id="KW-0436">Ligase</keyword>
<keyword id="KW-0547">Nucleotide-binding</keyword>
<keyword id="KW-0648">Protein biosynthesis</keyword>
<protein>
    <recommendedName>
        <fullName evidence="1">Glutamyl-tRNA(Gln) amidotransferase subunit A</fullName>
        <shortName evidence="1">Glu-ADT subunit A</shortName>
        <ecNumber evidence="1">6.3.5.7</ecNumber>
    </recommendedName>
</protein>
<proteinExistence type="inferred from homology"/>
<name>GATA_BURO1</name>
<evidence type="ECO:0000255" key="1">
    <source>
        <dbReference type="HAMAP-Rule" id="MF_00120"/>
    </source>
</evidence>
<reference key="1">
    <citation type="submission" date="2006-05" db="EMBL/GenBank/DDBJ databases">
        <title>Complete sequence of chromosome 1 of Burkholderia cenocepacia AU 1054.</title>
        <authorList>
            <consortium name="US DOE Joint Genome Institute"/>
            <person name="Copeland A."/>
            <person name="Lucas S."/>
            <person name="Lapidus A."/>
            <person name="Barry K."/>
            <person name="Detter J.C."/>
            <person name="Glavina del Rio T."/>
            <person name="Hammon N."/>
            <person name="Israni S."/>
            <person name="Dalin E."/>
            <person name="Tice H."/>
            <person name="Pitluck S."/>
            <person name="Chain P."/>
            <person name="Malfatti S."/>
            <person name="Shin M."/>
            <person name="Vergez L."/>
            <person name="Schmutz J."/>
            <person name="Larimer F."/>
            <person name="Land M."/>
            <person name="Hauser L."/>
            <person name="Kyrpides N."/>
            <person name="Lykidis A."/>
            <person name="LiPuma J.J."/>
            <person name="Konstantinidis K."/>
            <person name="Tiedje J.M."/>
            <person name="Richardson P."/>
        </authorList>
    </citation>
    <scope>NUCLEOTIDE SEQUENCE [LARGE SCALE GENOMIC DNA]</scope>
    <source>
        <strain>AU 1054</strain>
    </source>
</reference>